<organism>
    <name type="scientific">Saccharomyces cerevisiae (strain ATCC 204508 / S288c)</name>
    <name type="common">Baker's yeast</name>
    <dbReference type="NCBI Taxonomy" id="559292"/>
    <lineage>
        <taxon>Eukaryota</taxon>
        <taxon>Fungi</taxon>
        <taxon>Dikarya</taxon>
        <taxon>Ascomycota</taxon>
        <taxon>Saccharomycotina</taxon>
        <taxon>Saccharomycetes</taxon>
        <taxon>Saccharomycetales</taxon>
        <taxon>Saccharomycetaceae</taxon>
        <taxon>Saccharomyces</taxon>
    </lineage>
</organism>
<feature type="chain" id="PRO_0000234365" description="Phosphatidylglycerol phospholipase C">
    <location>
        <begin position="1"/>
        <end position="321"/>
    </location>
</feature>
<feature type="transmembrane region" description="Helical; Anchor for type IV membrane protein" evidence="1">
    <location>
        <begin position="297"/>
        <end position="315"/>
    </location>
</feature>
<feature type="domain" description="GP-PDE">
    <location>
        <begin position="2"/>
        <end position="251"/>
    </location>
</feature>
<accession>Q08959</accession>
<accession>D6W3G4</accession>
<keyword id="KW-0378">Hydrolase</keyword>
<keyword id="KW-0551">Lipid droplet</keyword>
<keyword id="KW-0443">Lipid metabolism</keyword>
<keyword id="KW-0472">Membrane</keyword>
<keyword id="KW-0496">Mitochondrion</keyword>
<keyword id="KW-1185">Reference proteome</keyword>
<keyword id="KW-0812">Transmembrane</keyword>
<keyword id="KW-1133">Transmembrane helix</keyword>
<reference key="1">
    <citation type="journal article" date="1997" name="Nature">
        <title>The nucleotide sequence of Saccharomyces cerevisiae chromosome XVI.</title>
        <authorList>
            <person name="Bussey H."/>
            <person name="Storms R.K."/>
            <person name="Ahmed A."/>
            <person name="Albermann K."/>
            <person name="Allen E."/>
            <person name="Ansorge W."/>
            <person name="Araujo R."/>
            <person name="Aparicio A."/>
            <person name="Barrell B.G."/>
            <person name="Badcock K."/>
            <person name="Benes V."/>
            <person name="Botstein D."/>
            <person name="Bowman S."/>
            <person name="Brueckner M."/>
            <person name="Carpenter J."/>
            <person name="Cherry J.M."/>
            <person name="Chung E."/>
            <person name="Churcher C.M."/>
            <person name="Coster F."/>
            <person name="Davis K."/>
            <person name="Davis R.W."/>
            <person name="Dietrich F.S."/>
            <person name="Delius H."/>
            <person name="DiPaolo T."/>
            <person name="Dubois E."/>
            <person name="Duesterhoeft A."/>
            <person name="Duncan M."/>
            <person name="Floeth M."/>
            <person name="Fortin N."/>
            <person name="Friesen J.D."/>
            <person name="Fritz C."/>
            <person name="Goffeau A."/>
            <person name="Hall J."/>
            <person name="Hebling U."/>
            <person name="Heumann K."/>
            <person name="Hilbert H."/>
            <person name="Hillier L.W."/>
            <person name="Hunicke-Smith S."/>
            <person name="Hyman R.W."/>
            <person name="Johnston M."/>
            <person name="Kalman S."/>
            <person name="Kleine K."/>
            <person name="Komp C."/>
            <person name="Kurdi O."/>
            <person name="Lashkari D."/>
            <person name="Lew H."/>
            <person name="Lin A."/>
            <person name="Lin D."/>
            <person name="Louis E.J."/>
            <person name="Marathe R."/>
            <person name="Messenguy F."/>
            <person name="Mewes H.-W."/>
            <person name="Mirtipati S."/>
            <person name="Moestl D."/>
            <person name="Mueller-Auer S."/>
            <person name="Namath A."/>
            <person name="Nentwich U."/>
            <person name="Oefner P."/>
            <person name="Pearson D."/>
            <person name="Petel F.X."/>
            <person name="Pohl T.M."/>
            <person name="Purnelle B."/>
            <person name="Rajandream M.A."/>
            <person name="Rechmann S."/>
            <person name="Rieger M."/>
            <person name="Riles L."/>
            <person name="Roberts D."/>
            <person name="Schaefer M."/>
            <person name="Scharfe M."/>
            <person name="Scherens B."/>
            <person name="Schramm S."/>
            <person name="Schroeder M."/>
            <person name="Sdicu A.-M."/>
            <person name="Tettelin H."/>
            <person name="Urrestarazu L.A."/>
            <person name="Ushinsky S."/>
            <person name="Vierendeels F."/>
            <person name="Vissers S."/>
            <person name="Voss H."/>
            <person name="Walsh S.V."/>
            <person name="Wambutt R."/>
            <person name="Wang Y."/>
            <person name="Wedler E."/>
            <person name="Wedler H."/>
            <person name="Winnett E."/>
            <person name="Zhong W.-W."/>
            <person name="Zollner A."/>
            <person name="Vo D.H."/>
            <person name="Hani J."/>
        </authorList>
    </citation>
    <scope>NUCLEOTIDE SEQUENCE [LARGE SCALE GENOMIC DNA]</scope>
    <source>
        <strain>ATCC 204508 / S288c</strain>
    </source>
</reference>
<reference key="2">
    <citation type="journal article" date="2014" name="G3 (Bethesda)">
        <title>The reference genome sequence of Saccharomyces cerevisiae: Then and now.</title>
        <authorList>
            <person name="Engel S.R."/>
            <person name="Dietrich F.S."/>
            <person name="Fisk D.G."/>
            <person name="Binkley G."/>
            <person name="Balakrishnan R."/>
            <person name="Costanzo M.C."/>
            <person name="Dwight S.S."/>
            <person name="Hitz B.C."/>
            <person name="Karra K."/>
            <person name="Nash R.S."/>
            <person name="Weng S."/>
            <person name="Wong E.D."/>
            <person name="Lloyd P."/>
            <person name="Skrzypek M.S."/>
            <person name="Miyasato S.R."/>
            <person name="Simison M."/>
            <person name="Cherry J.M."/>
        </authorList>
    </citation>
    <scope>GENOME REANNOTATION</scope>
    <source>
        <strain>ATCC 204508 / S288c</strain>
    </source>
</reference>
<reference key="3">
    <citation type="journal article" date="2003" name="J. Biol. Chem.">
        <title>Bipartite signals mediate subcellular targeting of tail-anchored membrane proteins in Saccharomyces cerevisiae.</title>
        <authorList>
            <person name="Beilharz T."/>
            <person name="Egan B."/>
            <person name="Silver P.A."/>
            <person name="Hofmann K."/>
            <person name="Lithgow T."/>
        </authorList>
    </citation>
    <scope>SUBCELLULAR LOCATION</scope>
</reference>
<reference key="4">
    <citation type="journal article" date="2003" name="Nature">
        <title>Global analysis of protein expression in yeast.</title>
        <authorList>
            <person name="Ghaemmaghami S."/>
            <person name="Huh W.-K."/>
            <person name="Bower K."/>
            <person name="Howson R.W."/>
            <person name="Belle A."/>
            <person name="Dephoure N."/>
            <person name="O'Shea E.K."/>
            <person name="Weissman J.S."/>
        </authorList>
    </citation>
    <scope>LEVEL OF PROTEIN EXPRESSION [LARGE SCALE ANALYSIS]</scope>
</reference>
<reference key="5">
    <citation type="journal article" date="2003" name="Proc. Natl. Acad. Sci. U.S.A.">
        <title>The proteome of Saccharomyces cerevisiae mitochondria.</title>
        <authorList>
            <person name="Sickmann A."/>
            <person name="Reinders J."/>
            <person name="Wagner Y."/>
            <person name="Joppich C."/>
            <person name="Zahedi R.P."/>
            <person name="Meyer H.E."/>
            <person name="Schoenfisch B."/>
            <person name="Perschil I."/>
            <person name="Chacinska A."/>
            <person name="Guiard B."/>
            <person name="Rehling P."/>
            <person name="Pfanner N."/>
            <person name="Meisinger C."/>
        </authorList>
    </citation>
    <scope>SUBCELLULAR LOCATION [LARGE SCALE ANALYSIS]</scope>
    <source>
        <strain>ATCC 76625 / YPH499</strain>
    </source>
</reference>
<reference key="6">
    <citation type="journal article" date="2005" name="J. Biol. Chem.">
        <title>Glycerophosphocholine-dependent growth requires Gde1p (YPL110c) and Git1p in Saccharomyces cerevisiae.</title>
        <authorList>
            <person name="Fisher E."/>
            <person name="Almaguer C."/>
            <person name="Holic R."/>
            <person name="Griac P."/>
            <person name="Patton-Vogt J."/>
        </authorList>
    </citation>
    <scope>DOMAIN</scope>
</reference>
<reference key="7">
    <citation type="journal article" date="2005" name="J. Biol. Chem.">
        <title>Glycerophosphocholine catabolism as a new route for choline formation for phosphatidylcholine synthesis by the Kennedy pathway.</title>
        <authorList>
            <person name="Fernandez-Murray J.P."/>
            <person name="McMaster C.R."/>
        </authorList>
    </citation>
    <scope>FUNCTION</scope>
</reference>
<reference key="8">
    <citation type="journal article" date="2008" name="J. Biol. Chem.">
        <title>Yeast Pgc1p (YPL206c) controls the amount of phosphatidylglycerol via a phospholipase C-type degradation mechanism.</title>
        <authorList>
            <person name="Simockova M."/>
            <person name="Holic R."/>
            <person name="Tahotna D."/>
            <person name="Patton-Vogt J."/>
            <person name="Griac P."/>
        </authorList>
    </citation>
    <scope>FUNCTION</scope>
    <scope>CATALYTIC ACTIVITY</scope>
    <scope>DISRUPTION PHENOTYPE</scope>
    <scope>SUBCELLULAR LOCATION</scope>
</reference>
<reference key="9">
    <citation type="journal article" date="2012" name="Proc. Natl. Acad. Sci. U.S.A.">
        <title>N-terminal acetylome analyses and functional insights of the N-terminal acetyltransferase NatB.</title>
        <authorList>
            <person name="Van Damme P."/>
            <person name="Lasa M."/>
            <person name="Polevoda B."/>
            <person name="Gazquez C."/>
            <person name="Elosegui-Artola A."/>
            <person name="Kim D.S."/>
            <person name="De Juan-Pardo E."/>
            <person name="Demeyer K."/>
            <person name="Hole K."/>
            <person name="Larrea E."/>
            <person name="Timmerman E."/>
            <person name="Prieto J."/>
            <person name="Arnesen T."/>
            <person name="Sherman F."/>
            <person name="Gevaert K."/>
            <person name="Aldabe R."/>
        </authorList>
    </citation>
    <scope>IDENTIFICATION BY MASS SPECTROMETRY [LARGE SCALE ANALYSIS]</scope>
</reference>
<reference key="10">
    <citation type="journal article" date="2014" name="J. Lipid Res.">
        <title>High-confidence proteomic analysis of yeast lipid droplets identifies additional droplet proteins and reveals connections to dolichol synthesis and sterol acetylation.</title>
        <authorList>
            <person name="Currie E."/>
            <person name="Guo X."/>
            <person name="Christiano R."/>
            <person name="Chitraju C."/>
            <person name="Kory N."/>
            <person name="Harrison K."/>
            <person name="Haas J."/>
            <person name="Walther T.C."/>
            <person name="Farese R.V. Jr."/>
        </authorList>
    </citation>
    <scope>SUBCELLULAR LOCATION</scope>
</reference>
<protein>
    <recommendedName>
        <fullName>Phosphatidylglycerol phospholipase C</fullName>
        <ecNumber>3.1.4.-</ecNumber>
    </recommendedName>
</protein>
<sequence length="321" mass="37070">MVEIVGHRAFKARYPENTLLAFEKAYAAGADVIETDLQMTSDGMVVVNHDSDTGRMWDKNLVIGESTWEEVKRLRCKEDGSLAMMTLKEILTWAVCHPGAKLMLDIKFTNEKIIMIKTFVIMLEVKNDLKFWQERITWGLWLLDWYDFGIETGVLKDFKVIVISLSLDIASQFVKRSLTLNDPHYKLFGISVHFVSSWTSQFRLRLLPVLMKNDIKVYLWTVNKPIDFKYLCELPIHGAITDDPIKARKLCDGHTVAKKPTAEKKFVAPSLASVDGLRFHAFIKVYNILCTLLYSKWVHIKLCGWSIAYVIFLFLRTIHFL</sequence>
<dbReference type="EC" id="3.1.4.-"/>
<dbReference type="EMBL" id="Z73562">
    <property type="protein sequence ID" value="CAA97920.1"/>
    <property type="molecule type" value="Genomic_DNA"/>
</dbReference>
<dbReference type="EMBL" id="BK006949">
    <property type="protein sequence ID" value="DAA11230.1"/>
    <property type="molecule type" value="Genomic_DNA"/>
</dbReference>
<dbReference type="PIR" id="S65225">
    <property type="entry name" value="S65225"/>
</dbReference>
<dbReference type="RefSeq" id="NP_015118.1">
    <property type="nucleotide sequence ID" value="NM_001184020.1"/>
</dbReference>
<dbReference type="SMR" id="Q08959"/>
<dbReference type="BioGRID" id="35979">
    <property type="interactions" value="31"/>
</dbReference>
<dbReference type="FunCoup" id="Q08959">
    <property type="interactions" value="146"/>
</dbReference>
<dbReference type="IntAct" id="Q08959">
    <property type="interactions" value="8"/>
</dbReference>
<dbReference type="STRING" id="4932.YPL206C"/>
<dbReference type="SwissLipids" id="SLP:000000075"/>
<dbReference type="PaxDb" id="4932-YPL206C"/>
<dbReference type="PeptideAtlas" id="Q08959"/>
<dbReference type="EnsemblFungi" id="YPL206C_mRNA">
    <property type="protein sequence ID" value="YPL206C"/>
    <property type="gene ID" value="YPL206C"/>
</dbReference>
<dbReference type="GeneID" id="855895"/>
<dbReference type="KEGG" id="sce:YPL206C"/>
<dbReference type="AGR" id="SGD:S000006127"/>
<dbReference type="SGD" id="S000006127">
    <property type="gene designation" value="PGC1"/>
</dbReference>
<dbReference type="VEuPathDB" id="FungiDB:YPL206C"/>
<dbReference type="eggNOG" id="KOG2258">
    <property type="taxonomic scope" value="Eukaryota"/>
</dbReference>
<dbReference type="GeneTree" id="ENSGT00940000172471"/>
<dbReference type="HOGENOM" id="CLU_030006_1_2_1"/>
<dbReference type="InParanoid" id="Q08959"/>
<dbReference type="OMA" id="RALPECW"/>
<dbReference type="OrthoDB" id="1058301at2759"/>
<dbReference type="BioCyc" id="MetaCyc:G3O-34097-MONOMER"/>
<dbReference type="BioCyc" id="YEAST:G3O-34097-MONOMER"/>
<dbReference type="BioGRID-ORCS" id="855895">
    <property type="hits" value="6 hits in 10 CRISPR screens"/>
</dbReference>
<dbReference type="PRO" id="PR:Q08959"/>
<dbReference type="Proteomes" id="UP000002311">
    <property type="component" value="Chromosome XVI"/>
</dbReference>
<dbReference type="RNAct" id="Q08959">
    <property type="molecule type" value="protein"/>
</dbReference>
<dbReference type="GO" id="GO:0005811">
    <property type="term" value="C:lipid droplet"/>
    <property type="evidence" value="ECO:0000314"/>
    <property type="project" value="SGD"/>
</dbReference>
<dbReference type="GO" id="GO:0031966">
    <property type="term" value="C:mitochondrial membrane"/>
    <property type="evidence" value="ECO:0007669"/>
    <property type="project" value="UniProtKB-SubCell"/>
</dbReference>
<dbReference type="GO" id="GO:0005739">
    <property type="term" value="C:mitochondrion"/>
    <property type="evidence" value="ECO:0000314"/>
    <property type="project" value="SGD"/>
</dbReference>
<dbReference type="GO" id="GO:0034479">
    <property type="term" value="F:phosphatidylglycerol phospholipase C activity"/>
    <property type="evidence" value="ECO:0000314"/>
    <property type="project" value="SGD"/>
</dbReference>
<dbReference type="GO" id="GO:0046475">
    <property type="term" value="P:glycerophospholipid catabolic process"/>
    <property type="evidence" value="ECO:0000315"/>
    <property type="project" value="SGD"/>
</dbReference>
<dbReference type="GO" id="GO:0034478">
    <property type="term" value="P:phosphatidylglycerol catabolic process"/>
    <property type="evidence" value="ECO:0000315"/>
    <property type="project" value="SGD"/>
</dbReference>
<dbReference type="CDD" id="cd08570">
    <property type="entry name" value="GDPD_YPL206cp_fungi"/>
    <property type="match status" value="1"/>
</dbReference>
<dbReference type="FunFam" id="3.20.20.190:FF:000058">
    <property type="entry name" value="Pgc1p"/>
    <property type="match status" value="1"/>
</dbReference>
<dbReference type="Gene3D" id="3.20.20.190">
    <property type="entry name" value="Phosphatidylinositol (PI) phosphodiesterase"/>
    <property type="match status" value="1"/>
</dbReference>
<dbReference type="InterPro" id="IPR052271">
    <property type="entry name" value="GDPD-Related"/>
</dbReference>
<dbReference type="InterPro" id="IPR030395">
    <property type="entry name" value="GP_PDE_dom"/>
</dbReference>
<dbReference type="InterPro" id="IPR017946">
    <property type="entry name" value="PLC-like_Pdiesterase_TIM-brl"/>
</dbReference>
<dbReference type="PANTHER" id="PTHR42758">
    <property type="entry name" value="PHOSPHATIDYLGLYCEROL PHOSPHOLIPASE C"/>
    <property type="match status" value="1"/>
</dbReference>
<dbReference type="PANTHER" id="PTHR42758:SF2">
    <property type="entry name" value="PHOSPHATIDYLGLYCEROL PHOSPHOLIPASE C"/>
    <property type="match status" value="1"/>
</dbReference>
<dbReference type="Pfam" id="PF03009">
    <property type="entry name" value="GDPD"/>
    <property type="match status" value="1"/>
</dbReference>
<dbReference type="SUPFAM" id="SSF51695">
    <property type="entry name" value="PLC-like phosphodiesterases"/>
    <property type="match status" value="1"/>
</dbReference>
<dbReference type="PROSITE" id="PS51704">
    <property type="entry name" value="GP_PDE"/>
    <property type="match status" value="1"/>
</dbReference>
<gene>
    <name type="primary">PGC1</name>
    <name type="ordered locus">YPL206C</name>
</gene>
<evidence type="ECO:0000255" key="1"/>
<evidence type="ECO:0000269" key="2">
    <source>
    </source>
</evidence>
<evidence type="ECO:0000269" key="3">
    <source>
    </source>
</evidence>
<evidence type="ECO:0000269" key="4">
    <source>
    </source>
</evidence>
<evidence type="ECO:0000269" key="5">
    <source>
    </source>
</evidence>
<evidence type="ECO:0000269" key="6">
    <source>
    </source>
</evidence>
<evidence type="ECO:0000269" key="7">
    <source>
    </source>
</evidence>
<evidence type="ECO:0000305" key="8"/>
<evidence type="ECO:0000305" key="9">
    <source>
    </source>
</evidence>
<proteinExistence type="evidence at protein level"/>
<name>PGC1_YEAST</name>
<comment type="function">
    <text evidence="5 6">Phosphatidylglycerol phospholipase required for the removal of excess phosphatidylglycerol (PG) via a phospholipase C-type degradation mechanism.</text>
</comment>
<comment type="catalytic activity">
    <reaction evidence="6">
        <text>a 1,2-diacyl-sn-glycero-3-phospho-(1'-sn-glycerol) + H2O = sn-glycerol 3-phosphate + a 1,2-diacyl-sn-glycerol + H(+)</text>
        <dbReference type="Rhea" id="RHEA:32927"/>
        <dbReference type="ChEBI" id="CHEBI:15377"/>
        <dbReference type="ChEBI" id="CHEBI:15378"/>
        <dbReference type="ChEBI" id="CHEBI:17815"/>
        <dbReference type="ChEBI" id="CHEBI:57597"/>
        <dbReference type="ChEBI" id="CHEBI:64716"/>
    </reaction>
    <physiologicalReaction direction="left-to-right" evidence="9">
        <dbReference type="Rhea" id="RHEA:32928"/>
    </physiologicalReaction>
</comment>
<comment type="subcellular location">
    <subcellularLocation>
        <location evidence="4 6">Mitochondrion membrane</location>
        <topology evidence="1">Single-pass type IV membrane protein</topology>
    </subcellularLocation>
    <subcellularLocation>
        <location evidence="2 7">Lipid droplet</location>
    </subcellularLocation>
</comment>
<comment type="disruption phenotype">
    <text evidence="6">Leads to the accumulation of phosphatidyl glycerol.</text>
</comment>
<comment type="miscellaneous">
    <text evidence="3">Present with 3270 molecules/cell in log phase SD medium.</text>
</comment>
<comment type="similarity">
    <text evidence="8">Belongs to the glycerophosphoryl diester phosphodiesterase family.</text>
</comment>